<comment type="catalytic activity">
    <reaction evidence="1">
        <text>alpha-D-galactose 1-phosphate + UDP-alpha-D-glucose = alpha-D-glucose 1-phosphate + UDP-alpha-D-galactose</text>
        <dbReference type="Rhea" id="RHEA:13989"/>
        <dbReference type="ChEBI" id="CHEBI:58336"/>
        <dbReference type="ChEBI" id="CHEBI:58601"/>
        <dbReference type="ChEBI" id="CHEBI:58885"/>
        <dbReference type="ChEBI" id="CHEBI:66914"/>
        <dbReference type="EC" id="2.7.7.12"/>
    </reaction>
</comment>
<comment type="pathway">
    <text evidence="1">Carbohydrate metabolism; galactose metabolism.</text>
</comment>
<comment type="subcellular location">
    <subcellularLocation>
        <location evidence="1">Cytoplasm</location>
    </subcellularLocation>
</comment>
<comment type="similarity">
    <text evidence="1">Belongs to the galactose-1-phosphate uridylyltransferase type 2 family.</text>
</comment>
<comment type="sequence caution" evidence="2">
    <conflict type="erroneous initiation">
        <sequence resource="EMBL-CDS" id="AAV62938"/>
    </conflict>
</comment>
<dbReference type="EC" id="2.7.7.12" evidence="1"/>
<dbReference type="EMBL" id="CP000024">
    <property type="protein sequence ID" value="AAV62938.1"/>
    <property type="status" value="ALT_INIT"/>
    <property type="molecule type" value="Genomic_DNA"/>
</dbReference>
<dbReference type="RefSeq" id="WP_041827071.1">
    <property type="nucleotide sequence ID" value="NC_006449.1"/>
</dbReference>
<dbReference type="GeneID" id="66899165"/>
<dbReference type="KEGG" id="stc:str1401"/>
<dbReference type="HOGENOM" id="CLU_047799_0_0_9"/>
<dbReference type="UniPathway" id="UPA00214"/>
<dbReference type="GO" id="GO:0005737">
    <property type="term" value="C:cytoplasm"/>
    <property type="evidence" value="ECO:0007669"/>
    <property type="project" value="UniProtKB-SubCell"/>
</dbReference>
<dbReference type="GO" id="GO:0008108">
    <property type="term" value="F:UDP-glucose:hexose-1-phosphate uridylyltransferase activity"/>
    <property type="evidence" value="ECO:0007669"/>
    <property type="project" value="UniProtKB-UniRule"/>
</dbReference>
<dbReference type="GO" id="GO:0006012">
    <property type="term" value="P:galactose metabolic process"/>
    <property type="evidence" value="ECO:0007669"/>
    <property type="project" value="UniProtKB-UniRule"/>
</dbReference>
<dbReference type="HAMAP" id="MF_00571">
    <property type="entry name" value="GalP_UDP_trans"/>
    <property type="match status" value="1"/>
</dbReference>
<dbReference type="InterPro" id="IPR000766">
    <property type="entry name" value="GalP_uridyl_Trfase_II"/>
</dbReference>
<dbReference type="InterPro" id="IPR023425">
    <property type="entry name" value="GalP_uridyl_Trfase_II_CS"/>
</dbReference>
<dbReference type="InterPro" id="IPR005850">
    <property type="entry name" value="GalP_Utransf_C"/>
</dbReference>
<dbReference type="InterPro" id="IPR005849">
    <property type="entry name" value="GalP_Utransf_N"/>
</dbReference>
<dbReference type="NCBIfam" id="TIGR01239">
    <property type="entry name" value="galT_2"/>
    <property type="match status" value="1"/>
</dbReference>
<dbReference type="NCBIfam" id="NF003629">
    <property type="entry name" value="PRK05270.1-2"/>
    <property type="match status" value="1"/>
</dbReference>
<dbReference type="NCBIfam" id="NF003631">
    <property type="entry name" value="PRK05270.1-5"/>
    <property type="match status" value="1"/>
</dbReference>
<dbReference type="NCBIfam" id="NF003633">
    <property type="entry name" value="PRK05270.2-2"/>
    <property type="match status" value="1"/>
</dbReference>
<dbReference type="PANTHER" id="PTHR39191:SF1">
    <property type="entry name" value="DUF4922 DOMAIN-CONTAINING PROTEIN"/>
    <property type="match status" value="1"/>
</dbReference>
<dbReference type="PANTHER" id="PTHR39191">
    <property type="entry name" value="GALACTOSE-1-PHOSPHATE URIDYLYLTRANSFERASE"/>
    <property type="match status" value="1"/>
</dbReference>
<dbReference type="Pfam" id="PF02744">
    <property type="entry name" value="GalP_UDP_tr_C"/>
    <property type="match status" value="1"/>
</dbReference>
<dbReference type="Pfam" id="PF01087">
    <property type="entry name" value="GalP_UDP_transf"/>
    <property type="match status" value="1"/>
</dbReference>
<dbReference type="PIRSF" id="PIRSF006005">
    <property type="entry name" value="GalT_BS"/>
    <property type="match status" value="1"/>
</dbReference>
<dbReference type="PROSITE" id="PS01163">
    <property type="entry name" value="GAL_P_UDP_TRANSF_II"/>
    <property type="match status" value="1"/>
</dbReference>
<keyword id="KW-0119">Carbohydrate metabolism</keyword>
<keyword id="KW-0963">Cytoplasm</keyword>
<keyword id="KW-0299">Galactose metabolism</keyword>
<keyword id="KW-0548">Nucleotidyltransferase</keyword>
<keyword id="KW-0808">Transferase</keyword>
<evidence type="ECO:0000255" key="1">
    <source>
        <dbReference type="HAMAP-Rule" id="MF_00571"/>
    </source>
</evidence>
<evidence type="ECO:0000305" key="2"/>
<reference key="1">
    <citation type="journal article" date="2004" name="Nat. Biotechnol.">
        <title>Complete sequence and comparative genome analysis of the dairy bacterium Streptococcus thermophilus.</title>
        <authorList>
            <person name="Bolotin A."/>
            <person name="Quinquis B."/>
            <person name="Renault P."/>
            <person name="Sorokin A."/>
            <person name="Ehrlich S.D."/>
            <person name="Kulakauskas S."/>
            <person name="Lapidus A."/>
            <person name="Goltsman E."/>
            <person name="Mazur M."/>
            <person name="Pusch G.D."/>
            <person name="Fonstein M."/>
            <person name="Overbeek R."/>
            <person name="Kyprides N."/>
            <person name="Purnelle B."/>
            <person name="Prozzi D."/>
            <person name="Ngui K."/>
            <person name="Masuy D."/>
            <person name="Hancy F."/>
            <person name="Burteau S."/>
            <person name="Boutry M."/>
            <person name="Delcour J."/>
            <person name="Goffeau A."/>
            <person name="Hols P."/>
        </authorList>
    </citation>
    <scope>NUCLEOTIDE SEQUENCE [LARGE SCALE GENOMIC DNA]</scope>
    <source>
        <strain>CNRZ 1066</strain>
    </source>
</reference>
<feature type="chain" id="PRO_0000169920" description="Galactose-1-phosphate uridylyltransferase">
    <location>
        <begin position="1"/>
        <end position="493"/>
    </location>
</feature>
<accession>Q5LYY8</accession>
<name>GALT_STRT1</name>
<proteinExistence type="inferred from homology"/>
<gene>
    <name evidence="1" type="primary">galT</name>
    <name type="ordered locus">str1401</name>
</gene>
<organism>
    <name type="scientific">Streptococcus thermophilus (strain CNRZ 1066)</name>
    <dbReference type="NCBI Taxonomy" id="299768"/>
    <lineage>
        <taxon>Bacteria</taxon>
        <taxon>Bacillati</taxon>
        <taxon>Bacillota</taxon>
        <taxon>Bacilli</taxon>
        <taxon>Lactobacillales</taxon>
        <taxon>Streptococcaceae</taxon>
        <taxon>Streptococcus</taxon>
    </lineage>
</organism>
<sequence>MAENLVNTFVTQVIENSDYEELDRIYLTNKVFTLVGEGVADVETDSSELIDLKDQLLQAGVKAGSVGELNEEQDIIGAQLMDLITPRPSVVNRNFWDTYKSNPEQAIADFYAQSKRNDYVKVKAIAQNIAYKAPTKYGDLEITINLSKPEKDPKAIAAAKNAVASDYPKCQLCMENEGYLGRINHPARSNHRVVRFQMEDKEWGFQYSPYAYFNEHSIFFYGKHEPMHISPLTFGRLLTIVEAFPGYFAGSNADLPIVGGSILTHEHYQGGRHTFPMEVAGIKEKVSFDGYSDVEAGIVNWPMSVLRLRSEDKERLIALATKILNCWRGYSDEKAGVLAESDGQPHHTITPIARRKDGKFELDLVLRDNQTSEEYPDGIYHPHKDVQHIKKENIGLIEVMGLAILPPRLKTELKDVEDYLLGQGNQVAPIHQEWADELKAQNPNITAEEVTEVVRQSVADIFARVLEDAGVYKTNSEGLDQFKAFVDFVNLAD</sequence>
<protein>
    <recommendedName>
        <fullName evidence="1">Galactose-1-phosphate uridylyltransferase</fullName>
        <shortName evidence="1">Gal-1-P uridylyltransferase</shortName>
        <ecNumber evidence="1">2.7.7.12</ecNumber>
    </recommendedName>
    <alternativeName>
        <fullName evidence="1">UDP-glucose--hexose-1-phosphate uridylyltransferase</fullName>
    </alternativeName>
</protein>